<evidence type="ECO:0000250" key="1"/>
<evidence type="ECO:0000250" key="2">
    <source>
        <dbReference type="UniProtKB" id="O15164"/>
    </source>
</evidence>
<evidence type="ECO:0000255" key="3"/>
<evidence type="ECO:0000255" key="4">
    <source>
        <dbReference type="PROSITE-ProRule" id="PRU00024"/>
    </source>
</evidence>
<evidence type="ECO:0000255" key="5">
    <source>
        <dbReference type="PROSITE-ProRule" id="PRU00035"/>
    </source>
</evidence>
<evidence type="ECO:0000255" key="6">
    <source>
        <dbReference type="PROSITE-ProRule" id="PRU00146"/>
    </source>
</evidence>
<evidence type="ECO:0000255" key="7">
    <source>
        <dbReference type="PROSITE-ProRule" id="PRU00175"/>
    </source>
</evidence>
<evidence type="ECO:0000256" key="8">
    <source>
        <dbReference type="SAM" id="MobiDB-lite"/>
    </source>
</evidence>
<evidence type="ECO:0000269" key="9">
    <source>
    </source>
</evidence>
<evidence type="ECO:0000269" key="10">
    <source>
    </source>
</evidence>
<evidence type="ECO:0000269" key="11">
    <source>
    </source>
</evidence>
<evidence type="ECO:0000269" key="12">
    <source>
    </source>
</evidence>
<evidence type="ECO:0000269" key="13">
    <source>
    </source>
</evidence>
<evidence type="ECO:0000269" key="14">
    <source>
    </source>
</evidence>
<evidence type="ECO:0000269" key="15">
    <source>
    </source>
</evidence>
<evidence type="ECO:0000269" key="16">
    <source>
    </source>
</evidence>
<evidence type="ECO:0000269" key="17">
    <source>
    </source>
</evidence>
<evidence type="ECO:0000269" key="18">
    <source>
    </source>
</evidence>
<evidence type="ECO:0000269" key="19">
    <source>
    </source>
</evidence>
<evidence type="ECO:0000305" key="20"/>
<evidence type="ECO:0007744" key="21">
    <source>
    </source>
</evidence>
<evidence type="ECO:0007744" key="22">
    <source>
    </source>
</evidence>
<evidence type="ECO:0007744" key="23">
    <source>
    </source>
</evidence>
<proteinExistence type="evidence at protein level"/>
<dbReference type="EC" id="2.3.2.27"/>
<dbReference type="EMBL" id="S78221">
    <property type="protein sequence ID" value="AAB34290.1"/>
    <property type="molecule type" value="mRNA"/>
</dbReference>
<dbReference type="EMBL" id="S78219">
    <property type="protein sequence ID" value="AAB34289.1"/>
    <property type="molecule type" value="mRNA"/>
</dbReference>
<dbReference type="EMBL" id="BC056959">
    <property type="protein sequence ID" value="AAH56959.1"/>
    <property type="molecule type" value="mRNA"/>
</dbReference>
<dbReference type="CCDS" id="CCDS20008.1">
    <molecule id="Q64127-1"/>
</dbReference>
<dbReference type="CCDS" id="CCDS71751.1">
    <molecule id="Q64127-2"/>
</dbReference>
<dbReference type="PIR" id="S55259">
    <property type="entry name" value="S55259"/>
</dbReference>
<dbReference type="RefSeq" id="NP_001258993.1">
    <molecule id="Q64127-2"/>
    <property type="nucleotide sequence ID" value="NM_001272064.1"/>
</dbReference>
<dbReference type="RefSeq" id="NP_001259005.1">
    <property type="nucleotide sequence ID" value="NM_001272076.1"/>
</dbReference>
<dbReference type="RefSeq" id="NP_659542.3">
    <molecule id="Q64127-1"/>
    <property type="nucleotide sequence ID" value="NM_145076.4"/>
</dbReference>
<dbReference type="SMR" id="Q64127"/>
<dbReference type="BioGRID" id="204196">
    <property type="interactions" value="23"/>
</dbReference>
<dbReference type="DIP" id="DIP-31476N"/>
<dbReference type="FunCoup" id="Q64127">
    <property type="interactions" value="3705"/>
</dbReference>
<dbReference type="IntAct" id="Q64127">
    <property type="interactions" value="12"/>
</dbReference>
<dbReference type="STRING" id="10090.ENSMUSP00000031859"/>
<dbReference type="GlyGen" id="Q64127">
    <property type="glycosylation" value="8 sites, 3 N-linked glycans (3 sites), 1 O-linked glycan (4 sites)"/>
</dbReference>
<dbReference type="iPTMnet" id="Q64127"/>
<dbReference type="PhosphoSitePlus" id="Q64127"/>
<dbReference type="SwissPalm" id="Q64127"/>
<dbReference type="jPOST" id="Q64127"/>
<dbReference type="PaxDb" id="10090-ENSMUSP00000031859"/>
<dbReference type="PeptideAtlas" id="Q64127"/>
<dbReference type="ProteomicsDB" id="262780">
    <molecule id="Q64127-1"/>
</dbReference>
<dbReference type="ProteomicsDB" id="262781">
    <molecule id="Q64127-2"/>
</dbReference>
<dbReference type="Pumba" id="Q64127"/>
<dbReference type="Antibodypedia" id="32326">
    <property type="antibodies" value="577 antibodies from 38 providers"/>
</dbReference>
<dbReference type="DNASU" id="21848"/>
<dbReference type="Ensembl" id="ENSMUST00000031859.14">
    <molecule id="Q64127-1"/>
    <property type="protein sequence ID" value="ENSMUSP00000031859.8"/>
    <property type="gene ID" value="ENSMUSG00000029833.18"/>
</dbReference>
<dbReference type="Ensembl" id="ENSMUST00000120428.8">
    <molecule id="Q64127-2"/>
    <property type="protein sequence ID" value="ENSMUSP00000113063.2"/>
    <property type="gene ID" value="ENSMUSG00000029833.18"/>
</dbReference>
<dbReference type="GeneID" id="21848"/>
<dbReference type="KEGG" id="mmu:21848"/>
<dbReference type="UCSC" id="uc009bjk.2">
    <molecule id="Q64127-1"/>
    <property type="organism name" value="mouse"/>
</dbReference>
<dbReference type="UCSC" id="uc009bjl.2">
    <molecule id="Q64127-2"/>
    <property type="organism name" value="mouse"/>
</dbReference>
<dbReference type="AGR" id="MGI:109275"/>
<dbReference type="CTD" id="8805"/>
<dbReference type="MGI" id="MGI:109275">
    <property type="gene designation" value="Trim24"/>
</dbReference>
<dbReference type="VEuPathDB" id="HostDB:ENSMUSG00000029833"/>
<dbReference type="eggNOG" id="KOG2177">
    <property type="taxonomic scope" value="Eukaryota"/>
</dbReference>
<dbReference type="GeneTree" id="ENSGT00940000159863"/>
<dbReference type="HOGENOM" id="CLU_005817_0_1_1"/>
<dbReference type="InParanoid" id="Q64127"/>
<dbReference type="OMA" id="AIKQWQV"/>
<dbReference type="OrthoDB" id="1870062at2759"/>
<dbReference type="PhylomeDB" id="Q64127"/>
<dbReference type="TreeFam" id="TF106455"/>
<dbReference type="UniPathway" id="UPA00143"/>
<dbReference type="BioGRID-ORCS" id="21848">
    <property type="hits" value="15 hits in 86 CRISPR screens"/>
</dbReference>
<dbReference type="CD-CODE" id="AD9D4934">
    <property type="entry name" value="P-body"/>
</dbReference>
<dbReference type="ChiTaRS" id="Trim24">
    <property type="organism name" value="mouse"/>
</dbReference>
<dbReference type="PRO" id="PR:Q64127"/>
<dbReference type="Proteomes" id="UP000000589">
    <property type="component" value="Chromosome 6"/>
</dbReference>
<dbReference type="RNAct" id="Q64127">
    <property type="molecule type" value="protein"/>
</dbReference>
<dbReference type="Bgee" id="ENSMUSG00000029833">
    <property type="expression patterns" value="Expressed in animal zygote and 273 other cell types or tissues"/>
</dbReference>
<dbReference type="ExpressionAtlas" id="Q64127">
    <property type="expression patterns" value="baseline and differential"/>
</dbReference>
<dbReference type="GO" id="GO:0005737">
    <property type="term" value="C:cytoplasm"/>
    <property type="evidence" value="ECO:0000314"/>
    <property type="project" value="MGI"/>
</dbReference>
<dbReference type="GO" id="GO:0000791">
    <property type="term" value="C:euchromatin"/>
    <property type="evidence" value="ECO:0000314"/>
    <property type="project" value="MGI"/>
</dbReference>
<dbReference type="GO" id="GO:0001673">
    <property type="term" value="C:male germ cell nucleus"/>
    <property type="evidence" value="ECO:0000314"/>
    <property type="project" value="MGI"/>
</dbReference>
<dbReference type="GO" id="GO:0005654">
    <property type="term" value="C:nucleoplasm"/>
    <property type="evidence" value="ECO:0007669"/>
    <property type="project" value="Ensembl"/>
</dbReference>
<dbReference type="GO" id="GO:0005634">
    <property type="term" value="C:nucleus"/>
    <property type="evidence" value="ECO:0000314"/>
    <property type="project" value="UniProtKB"/>
</dbReference>
<dbReference type="GO" id="GO:0005726">
    <property type="term" value="C:perichromatin fibrils"/>
    <property type="evidence" value="ECO:0000314"/>
    <property type="project" value="MGI"/>
</dbReference>
<dbReference type="GO" id="GO:0003682">
    <property type="term" value="F:chromatin binding"/>
    <property type="evidence" value="ECO:0000314"/>
    <property type="project" value="MGI"/>
</dbReference>
<dbReference type="GO" id="GO:0034056">
    <property type="term" value="F:estrogen response element binding"/>
    <property type="evidence" value="ECO:0000250"/>
    <property type="project" value="UniProtKB"/>
</dbReference>
<dbReference type="GO" id="GO:0070577">
    <property type="term" value="F:lysine-acetylated histone binding"/>
    <property type="evidence" value="ECO:0000250"/>
    <property type="project" value="UniProtKB"/>
</dbReference>
<dbReference type="GO" id="GO:0016922">
    <property type="term" value="F:nuclear receptor binding"/>
    <property type="evidence" value="ECO:0000314"/>
    <property type="project" value="MGI"/>
</dbReference>
<dbReference type="GO" id="GO:0002039">
    <property type="term" value="F:p53 binding"/>
    <property type="evidence" value="ECO:0000353"/>
    <property type="project" value="UniProtKB"/>
</dbReference>
<dbReference type="GO" id="GO:0004672">
    <property type="term" value="F:protein kinase activity"/>
    <property type="evidence" value="ECO:0000314"/>
    <property type="project" value="MGI"/>
</dbReference>
<dbReference type="GO" id="GO:0043565">
    <property type="term" value="F:sequence-specific DNA binding"/>
    <property type="evidence" value="ECO:0000314"/>
    <property type="project" value="MGI"/>
</dbReference>
<dbReference type="GO" id="GO:0003713">
    <property type="term" value="F:transcription coactivator activity"/>
    <property type="evidence" value="ECO:0000314"/>
    <property type="project" value="UniProtKB"/>
</dbReference>
<dbReference type="GO" id="GO:0061630">
    <property type="term" value="F:ubiquitin protein ligase activity"/>
    <property type="evidence" value="ECO:0000314"/>
    <property type="project" value="MGI"/>
</dbReference>
<dbReference type="GO" id="GO:0004842">
    <property type="term" value="F:ubiquitin-protein transferase activity"/>
    <property type="evidence" value="ECO:0000314"/>
    <property type="project" value="UniProtKB"/>
</dbReference>
<dbReference type="GO" id="GO:0008270">
    <property type="term" value="F:zinc ion binding"/>
    <property type="evidence" value="ECO:0000250"/>
    <property type="project" value="UniProtKB"/>
</dbReference>
<dbReference type="GO" id="GO:0055074">
    <property type="term" value="P:calcium ion homeostasis"/>
    <property type="evidence" value="ECO:0000315"/>
    <property type="project" value="MGI"/>
</dbReference>
<dbReference type="GO" id="GO:0071391">
    <property type="term" value="P:cellular response to estrogen stimulus"/>
    <property type="evidence" value="ECO:0000250"/>
    <property type="project" value="UniProtKB"/>
</dbReference>
<dbReference type="GO" id="GO:0050673">
    <property type="term" value="P:epithelial cell proliferation"/>
    <property type="evidence" value="ECO:0000315"/>
    <property type="project" value="MGI"/>
</dbReference>
<dbReference type="GO" id="GO:0045892">
    <property type="term" value="P:negative regulation of DNA-templated transcription"/>
    <property type="evidence" value="ECO:0000314"/>
    <property type="project" value="MGI"/>
</dbReference>
<dbReference type="GO" id="GO:0050680">
    <property type="term" value="P:negative regulation of epithelial cell proliferation"/>
    <property type="evidence" value="ECO:0000315"/>
    <property type="project" value="MGI"/>
</dbReference>
<dbReference type="GO" id="GO:0045893">
    <property type="term" value="P:positive regulation of DNA-templated transcription"/>
    <property type="evidence" value="ECO:0000316"/>
    <property type="project" value="MGI"/>
</dbReference>
<dbReference type="GO" id="GO:0010628">
    <property type="term" value="P:positive regulation of gene expression"/>
    <property type="evidence" value="ECO:0000315"/>
    <property type="project" value="MGI"/>
</dbReference>
<dbReference type="GO" id="GO:0030163">
    <property type="term" value="P:protein catabolic process"/>
    <property type="evidence" value="ECO:0000315"/>
    <property type="project" value="UniProtKB"/>
</dbReference>
<dbReference type="GO" id="GO:0016567">
    <property type="term" value="P:protein ubiquitination"/>
    <property type="evidence" value="ECO:0000314"/>
    <property type="project" value="UniProtKB"/>
</dbReference>
<dbReference type="GO" id="GO:0042981">
    <property type="term" value="P:regulation of apoptotic process"/>
    <property type="evidence" value="ECO:0007669"/>
    <property type="project" value="Ensembl"/>
</dbReference>
<dbReference type="GO" id="GO:0031647">
    <property type="term" value="P:regulation of protein stability"/>
    <property type="evidence" value="ECO:0000315"/>
    <property type="project" value="UniProtKB"/>
</dbReference>
<dbReference type="GO" id="GO:1901796">
    <property type="term" value="P:regulation of signal transduction by p53 class mediator"/>
    <property type="evidence" value="ECO:0000316"/>
    <property type="project" value="MGI"/>
</dbReference>
<dbReference type="GO" id="GO:0070562">
    <property type="term" value="P:regulation of vitamin D receptor signaling pathway"/>
    <property type="evidence" value="ECO:0000315"/>
    <property type="project" value="MGI"/>
</dbReference>
<dbReference type="GO" id="GO:0043434">
    <property type="term" value="P:response to peptide hormone"/>
    <property type="evidence" value="ECO:0007669"/>
    <property type="project" value="Ensembl"/>
</dbReference>
<dbReference type="CDD" id="cd19845">
    <property type="entry name" value="Bbox1_TIF1a_C-VI"/>
    <property type="match status" value="1"/>
</dbReference>
<dbReference type="CDD" id="cd19828">
    <property type="entry name" value="Bbox2_TIF1a_C-VI"/>
    <property type="match status" value="1"/>
</dbReference>
<dbReference type="CDD" id="cd05502">
    <property type="entry name" value="Bromo_tif1_like"/>
    <property type="match status" value="1"/>
</dbReference>
<dbReference type="CDD" id="cd15624">
    <property type="entry name" value="PHD_TIF1gamma"/>
    <property type="match status" value="1"/>
</dbReference>
<dbReference type="CDD" id="cd16764">
    <property type="entry name" value="RING-HC_TIF1alpha"/>
    <property type="match status" value="1"/>
</dbReference>
<dbReference type="FunFam" id="3.30.40.10:FF:000123">
    <property type="entry name" value="E3 ubiquitin-protein ligase TRIM33"/>
    <property type="match status" value="1"/>
</dbReference>
<dbReference type="FunFam" id="1.20.920.10:FF:000024">
    <property type="entry name" value="Transcription intermediary factor 1-alpha"/>
    <property type="match status" value="1"/>
</dbReference>
<dbReference type="FunFam" id="3.30.160.60:FF:000074">
    <property type="entry name" value="Tripartite motif containing 66"/>
    <property type="match status" value="1"/>
</dbReference>
<dbReference type="Gene3D" id="1.20.920.10">
    <property type="entry name" value="Bromodomain-like"/>
    <property type="match status" value="1"/>
</dbReference>
<dbReference type="Gene3D" id="3.30.160.60">
    <property type="entry name" value="Classic Zinc Finger"/>
    <property type="match status" value="1"/>
</dbReference>
<dbReference type="Gene3D" id="3.30.40.10">
    <property type="entry name" value="Zinc/RING finger domain, C3HC4 (zinc finger)"/>
    <property type="match status" value="2"/>
</dbReference>
<dbReference type="InterPro" id="IPR003649">
    <property type="entry name" value="Bbox_C"/>
</dbReference>
<dbReference type="InterPro" id="IPR001487">
    <property type="entry name" value="Bromodomain"/>
</dbReference>
<dbReference type="InterPro" id="IPR036427">
    <property type="entry name" value="Bromodomain-like_sf"/>
</dbReference>
<dbReference type="InterPro" id="IPR018359">
    <property type="entry name" value="Bromodomain_CS"/>
</dbReference>
<dbReference type="InterPro" id="IPR019786">
    <property type="entry name" value="Zinc_finger_PHD-type_CS"/>
</dbReference>
<dbReference type="InterPro" id="IPR000315">
    <property type="entry name" value="Znf_B-box"/>
</dbReference>
<dbReference type="InterPro" id="IPR011011">
    <property type="entry name" value="Znf_FYVE_PHD"/>
</dbReference>
<dbReference type="InterPro" id="IPR001965">
    <property type="entry name" value="Znf_PHD"/>
</dbReference>
<dbReference type="InterPro" id="IPR019787">
    <property type="entry name" value="Znf_PHD-finger"/>
</dbReference>
<dbReference type="InterPro" id="IPR001841">
    <property type="entry name" value="Znf_RING"/>
</dbReference>
<dbReference type="InterPro" id="IPR013083">
    <property type="entry name" value="Znf_RING/FYVE/PHD"/>
</dbReference>
<dbReference type="InterPro" id="IPR017907">
    <property type="entry name" value="Znf_RING_CS"/>
</dbReference>
<dbReference type="PANTHER" id="PTHR45915">
    <property type="entry name" value="TRANSCRIPTION INTERMEDIARY FACTOR"/>
    <property type="match status" value="1"/>
</dbReference>
<dbReference type="PANTHER" id="PTHR45915:SF4">
    <property type="entry name" value="TRANSCRIPTION INTERMEDIARY FACTOR 1-ALPHA"/>
    <property type="match status" value="1"/>
</dbReference>
<dbReference type="Pfam" id="PF00439">
    <property type="entry name" value="Bromodomain"/>
    <property type="match status" value="1"/>
</dbReference>
<dbReference type="Pfam" id="PF00628">
    <property type="entry name" value="PHD"/>
    <property type="match status" value="1"/>
</dbReference>
<dbReference type="Pfam" id="PF00643">
    <property type="entry name" value="zf-B_box"/>
    <property type="match status" value="1"/>
</dbReference>
<dbReference type="PRINTS" id="PR00503">
    <property type="entry name" value="BROMODOMAIN"/>
</dbReference>
<dbReference type="SMART" id="SM00502">
    <property type="entry name" value="BBC"/>
    <property type="match status" value="1"/>
</dbReference>
<dbReference type="SMART" id="SM00336">
    <property type="entry name" value="BBOX"/>
    <property type="match status" value="2"/>
</dbReference>
<dbReference type="SMART" id="SM00297">
    <property type="entry name" value="BROMO"/>
    <property type="match status" value="1"/>
</dbReference>
<dbReference type="SMART" id="SM00249">
    <property type="entry name" value="PHD"/>
    <property type="match status" value="1"/>
</dbReference>
<dbReference type="SMART" id="SM00184">
    <property type="entry name" value="RING"/>
    <property type="match status" value="1"/>
</dbReference>
<dbReference type="SUPFAM" id="SSF57845">
    <property type="entry name" value="B-box zinc-binding domain"/>
    <property type="match status" value="1"/>
</dbReference>
<dbReference type="SUPFAM" id="SSF47370">
    <property type="entry name" value="Bromodomain"/>
    <property type="match status" value="1"/>
</dbReference>
<dbReference type="SUPFAM" id="SSF57903">
    <property type="entry name" value="FYVE/PHD zinc finger"/>
    <property type="match status" value="1"/>
</dbReference>
<dbReference type="SUPFAM" id="SSF57850">
    <property type="entry name" value="RING/U-box"/>
    <property type="match status" value="1"/>
</dbReference>
<dbReference type="PROSITE" id="PS00633">
    <property type="entry name" value="BROMODOMAIN_1"/>
    <property type="match status" value="1"/>
</dbReference>
<dbReference type="PROSITE" id="PS50014">
    <property type="entry name" value="BROMODOMAIN_2"/>
    <property type="match status" value="1"/>
</dbReference>
<dbReference type="PROSITE" id="PS50119">
    <property type="entry name" value="ZF_BBOX"/>
    <property type="match status" value="2"/>
</dbReference>
<dbReference type="PROSITE" id="PS01359">
    <property type="entry name" value="ZF_PHD_1"/>
    <property type="match status" value="1"/>
</dbReference>
<dbReference type="PROSITE" id="PS50016">
    <property type="entry name" value="ZF_PHD_2"/>
    <property type="match status" value="1"/>
</dbReference>
<dbReference type="PROSITE" id="PS00518">
    <property type="entry name" value="ZF_RING_1"/>
    <property type="match status" value="1"/>
</dbReference>
<dbReference type="PROSITE" id="PS50089">
    <property type="entry name" value="ZF_RING_2"/>
    <property type="match status" value="1"/>
</dbReference>
<feature type="chain" id="PRO_0000056391" description="Transcription intermediary factor 1-alpha">
    <location>
        <begin position="1"/>
        <end position="1051"/>
    </location>
</feature>
<feature type="domain" description="Bromo" evidence="5">
    <location>
        <begin position="900"/>
        <end position="1005"/>
    </location>
</feature>
<feature type="zinc finger region" description="RING-type" evidence="7">
    <location>
        <begin position="52"/>
        <end position="77"/>
    </location>
</feature>
<feature type="zinc finger region" description="B box-type 1" evidence="4">
    <location>
        <begin position="158"/>
        <end position="211"/>
    </location>
</feature>
<feature type="zinc finger region" description="B box-type 2" evidence="4">
    <location>
        <begin position="218"/>
        <end position="259"/>
    </location>
</feature>
<feature type="zinc finger region" description="PHD-type" evidence="6">
    <location>
        <begin position="827"/>
        <end position="874"/>
    </location>
</feature>
<feature type="region of interest" description="Disordered" evidence="8">
    <location>
        <begin position="1"/>
        <end position="42"/>
    </location>
</feature>
<feature type="region of interest" description="Disordered" evidence="8">
    <location>
        <begin position="94"/>
        <end position="115"/>
    </location>
</feature>
<feature type="region of interest" description="Disordered" evidence="8">
    <location>
        <begin position="429"/>
        <end position="457"/>
    </location>
</feature>
<feature type="region of interest" description="Disordered" evidence="8">
    <location>
        <begin position="479"/>
        <end position="551"/>
    </location>
</feature>
<feature type="region of interest" description="Disordered" evidence="8">
    <location>
        <begin position="644"/>
        <end position="713"/>
    </location>
</feature>
<feature type="region of interest" description="Nuclear receptor binding site (NRBS)">
    <location>
        <begin position="755"/>
        <end position="780"/>
    </location>
</feature>
<feature type="region of interest" description="Disordered" evidence="8">
    <location>
        <begin position="771"/>
        <end position="827"/>
    </location>
</feature>
<feature type="region of interest" description="Interaction with histone H3 that is not methylated at 'Lys-4' (H3K4me0)" evidence="1">
    <location>
        <begin position="835"/>
        <end position="841"/>
    </location>
</feature>
<feature type="region of interest" description="Disordered" evidence="8">
    <location>
        <begin position="1024"/>
        <end position="1051"/>
    </location>
</feature>
<feature type="coiled-coil region" evidence="3">
    <location>
        <begin position="289"/>
        <end position="359"/>
    </location>
</feature>
<feature type="short sequence motif" description="Nuclear localization signal" evidence="3">
    <location>
        <begin position="892"/>
        <end position="908"/>
    </location>
</feature>
<feature type="compositionally biased region" description="Low complexity" evidence="8">
    <location>
        <begin position="8"/>
        <end position="23"/>
    </location>
</feature>
<feature type="compositionally biased region" description="Pro residues" evidence="8">
    <location>
        <begin position="97"/>
        <end position="109"/>
    </location>
</feature>
<feature type="compositionally biased region" description="Polar residues" evidence="8">
    <location>
        <begin position="431"/>
        <end position="457"/>
    </location>
</feature>
<feature type="compositionally biased region" description="Low complexity" evidence="8">
    <location>
        <begin position="479"/>
        <end position="490"/>
    </location>
</feature>
<feature type="compositionally biased region" description="Low complexity" evidence="8">
    <location>
        <begin position="501"/>
        <end position="510"/>
    </location>
</feature>
<feature type="compositionally biased region" description="Pro residues" evidence="8">
    <location>
        <begin position="526"/>
        <end position="535"/>
    </location>
</feature>
<feature type="compositionally biased region" description="Polar residues" evidence="8">
    <location>
        <begin position="538"/>
        <end position="551"/>
    </location>
</feature>
<feature type="compositionally biased region" description="Polar residues" evidence="8">
    <location>
        <begin position="655"/>
        <end position="667"/>
    </location>
</feature>
<feature type="compositionally biased region" description="Low complexity" evidence="8">
    <location>
        <begin position="686"/>
        <end position="708"/>
    </location>
</feature>
<feature type="compositionally biased region" description="Polar residues" evidence="8">
    <location>
        <begin position="795"/>
        <end position="812"/>
    </location>
</feature>
<feature type="compositionally biased region" description="Basic and acidic residues" evidence="8">
    <location>
        <begin position="1042"/>
        <end position="1051"/>
    </location>
</feature>
<feature type="binding site" evidence="4">
    <location>
        <position position="163"/>
    </location>
    <ligand>
        <name>Zn(2+)</name>
        <dbReference type="ChEBI" id="CHEBI:29105"/>
        <label>1</label>
    </ligand>
</feature>
<feature type="binding site" evidence="4">
    <location>
        <position position="166"/>
    </location>
    <ligand>
        <name>Zn(2+)</name>
        <dbReference type="ChEBI" id="CHEBI:29105"/>
        <label>1</label>
    </ligand>
</feature>
<feature type="binding site" evidence="4">
    <location>
        <position position="187"/>
    </location>
    <ligand>
        <name>Zn(2+)</name>
        <dbReference type="ChEBI" id="CHEBI:29105"/>
        <label>1</label>
    </ligand>
</feature>
<feature type="binding site" evidence="4">
    <location>
        <position position="200"/>
    </location>
    <ligand>
        <name>Zn(2+)</name>
        <dbReference type="ChEBI" id="CHEBI:29105"/>
        <label>1</label>
    </ligand>
</feature>
<feature type="binding site" evidence="4">
    <location>
        <position position="223"/>
    </location>
    <ligand>
        <name>Zn(2+)</name>
        <dbReference type="ChEBI" id="CHEBI:29105"/>
        <label>2</label>
    </ligand>
</feature>
<feature type="binding site" evidence="4">
    <location>
        <position position="226"/>
    </location>
    <ligand>
        <name>Zn(2+)</name>
        <dbReference type="ChEBI" id="CHEBI:29105"/>
        <label>2</label>
    </ligand>
</feature>
<feature type="binding site" evidence="4">
    <location>
        <position position="246"/>
    </location>
    <ligand>
        <name>Zn(2+)</name>
        <dbReference type="ChEBI" id="CHEBI:29105"/>
        <label>2</label>
    </ligand>
</feature>
<feature type="binding site" evidence="4">
    <location>
        <position position="251"/>
    </location>
    <ligand>
        <name>Zn(2+)</name>
        <dbReference type="ChEBI" id="CHEBI:29105"/>
        <label>2</label>
    </ligand>
</feature>
<feature type="site" description="Breakpoint for translocation to form TRIM24-BRAF oncogene">
    <location>
        <begin position="332"/>
        <end position="333"/>
    </location>
</feature>
<feature type="site" description="Interaction with histone H3 that is not methylated at 'Lys-4' (H3K4me0)" evidence="1">
    <location>
        <position position="828"/>
    </location>
</feature>
<feature type="modified residue" description="Phosphothreonine" evidence="2">
    <location>
        <position position="97"/>
    </location>
</feature>
<feature type="modified residue" description="Phosphoserine" evidence="2">
    <location>
        <position position="110"/>
    </location>
</feature>
<feature type="modified residue" description="Omega-N-methylarginine" evidence="23">
    <location>
        <position position="469"/>
    </location>
</feature>
<feature type="modified residue" description="Phosphoserine" evidence="2">
    <location>
        <position position="655"/>
    </location>
</feature>
<feature type="modified residue" description="Phosphoserine" evidence="22">
    <location>
        <position position="661"/>
    </location>
</feature>
<feature type="modified residue" description="Phosphoserine" evidence="22">
    <location>
        <position position="668"/>
    </location>
</feature>
<feature type="modified residue" description="Phosphoserine" evidence="2">
    <location>
        <position position="745"/>
    </location>
</feature>
<feature type="modified residue" description="Phosphoserine" evidence="2">
    <location>
        <position position="769"/>
    </location>
</feature>
<feature type="modified residue" description="Phosphoserine" evidence="2">
    <location>
        <position position="809"/>
    </location>
</feature>
<feature type="modified residue" description="Phosphoserine" evidence="22">
    <location>
        <position position="812"/>
    </location>
</feature>
<feature type="modified residue" description="Phosphothreonine" evidence="2">
    <location>
        <position position="819"/>
    </location>
</feature>
<feature type="modified residue" description="Phosphoserine" evidence="21 22">
    <location>
        <position position="1026"/>
    </location>
</feature>
<feature type="modified residue" description="Phosphoserine" evidence="2">
    <location>
        <position position="1029"/>
    </location>
</feature>
<feature type="modified residue" description="Phosphoserine" evidence="2">
    <location>
        <position position="1043"/>
    </location>
</feature>
<feature type="cross-link" description="Glycyl lysine isopeptide (Lys-Gly) (interchain with G-Cter in SUMO2)" evidence="2">
    <location>
        <position position="7"/>
    </location>
</feature>
<feature type="cross-link" description="Glycyl lysine isopeptide (Lys-Gly) (interchain with G-Cter in SUMO2)" evidence="2">
    <location>
        <position position="205"/>
    </location>
</feature>
<feature type="cross-link" description="Glycyl lysine isopeptide (Lys-Gly) (interchain with G-Cter in SUMO2)" evidence="2">
    <location>
        <position position="276"/>
    </location>
</feature>
<feature type="cross-link" description="Glycyl lysine isopeptide (Lys-Gly) (interchain with G-Cter in SUMO2)" evidence="2">
    <location>
        <position position="436"/>
    </location>
</feature>
<feature type="cross-link" description="Glycyl lysine isopeptide (Lys-Gly) (interchain with G-Cter in SUMO2)" evidence="2">
    <location>
        <position position="458"/>
    </location>
</feature>
<feature type="cross-link" description="Glycyl lysine isopeptide (Lys-Gly) (interchain with G-Cter in SUMO2)" evidence="2">
    <location>
        <position position="553"/>
    </location>
</feature>
<feature type="cross-link" description="Glycyl lysine isopeptide (Lys-Gly) (interchain with G-Cter in SUMO2)" evidence="2">
    <location>
        <position position="642"/>
    </location>
</feature>
<feature type="cross-link" description="Glycyl lysine isopeptide (Lys-Gly) (interchain with G-Cter in SUMO2)" evidence="2">
    <location>
        <position position="703"/>
    </location>
</feature>
<feature type="cross-link" description="Glycyl lysine isopeptide (Lys-Gly) (interchain with G-Cter in SUMO2)" evidence="2">
    <location>
        <position position="712"/>
    </location>
</feature>
<feature type="cross-link" description="Glycyl lysine isopeptide (Lys-Gly) (interchain with G-Cter in SUMO); alternate" evidence="20">
    <location>
        <position position="724"/>
    </location>
</feature>
<feature type="cross-link" description="Glycyl lysine isopeptide (Lys-Gly) (interchain with G-Cter in SUMO1); alternate" evidence="2">
    <location>
        <position position="724"/>
    </location>
</feature>
<feature type="cross-link" description="Glycyl lysine isopeptide (Lys-Gly) (interchain with G-Cter in SUMO2); alternate" evidence="2">
    <location>
        <position position="724"/>
    </location>
</feature>
<feature type="cross-link" description="Glycyl lysine isopeptide (Lys-Gly) (interchain with G-Cter in SUMO); alternate" evidence="20">
    <location>
        <position position="742"/>
    </location>
</feature>
<feature type="cross-link" description="Glycyl lysine isopeptide (Lys-Gly) (interchain with G-Cter in SUMO2); alternate" evidence="2">
    <location>
        <position position="742"/>
    </location>
</feature>
<feature type="cross-link" description="Glycyl lysine isopeptide (Lys-Gly) (interchain with G-Cter in SUMO2)" evidence="2">
    <location>
        <position position="802"/>
    </location>
</feature>
<feature type="cross-link" description="Glycyl lysine isopeptide (Lys-Gly) (interchain with G-Cter in SUMO2)" evidence="2">
    <location>
        <position position="811"/>
    </location>
</feature>
<feature type="cross-link" description="Glycyl lysine isopeptide (Lys-Gly) (interchain with G-Cter in SUMO2)" evidence="2">
    <location>
        <position position="876"/>
    </location>
</feature>
<feature type="cross-link" description="Glycyl lysine isopeptide (Lys-Gly) (interchain with G-Cter in SUMO2)" evidence="2">
    <location>
        <position position="950"/>
    </location>
</feature>
<feature type="cross-link" description="Glycyl lysine isopeptide (Lys-Gly) (interchain with G-Cter in SUMO2)" evidence="2">
    <location>
        <position position="993"/>
    </location>
</feature>
<feature type="cross-link" description="Glycyl lysine isopeptide (Lys-Gly) (interchain with G-Cter in SUMO2)" evidence="2">
    <location>
        <position position="1042"/>
    </location>
</feature>
<feature type="splice variant" id="VSP_005773" description="In isoform Short." evidence="20">
    <location>
        <begin position="477"/>
        <end position="510"/>
    </location>
</feature>
<feature type="mutagenesis site" description="Loss of sumoylation; when associated with R-742." evidence="10">
    <original>K</original>
    <variation>R</variation>
    <location>
        <position position="724"/>
    </location>
</feature>
<feature type="mutagenesis site" description="Loss of sumoylation; when associated with R-724." evidence="10">
    <original>K</original>
    <variation>R</variation>
    <location>
        <position position="742"/>
    </location>
</feature>
<keyword id="KW-0025">Alternative splicing</keyword>
<keyword id="KW-0103">Bromodomain</keyword>
<keyword id="KW-0160">Chromosomal rearrangement</keyword>
<keyword id="KW-0175">Coiled coil</keyword>
<keyword id="KW-0963">Cytoplasm</keyword>
<keyword id="KW-0238">DNA-binding</keyword>
<keyword id="KW-1017">Isopeptide bond</keyword>
<keyword id="KW-0479">Metal-binding</keyword>
<keyword id="KW-0488">Methylation</keyword>
<keyword id="KW-0539">Nucleus</keyword>
<keyword id="KW-0597">Phosphoprotein</keyword>
<keyword id="KW-0656">Proto-oncogene</keyword>
<keyword id="KW-1185">Reference proteome</keyword>
<keyword id="KW-0677">Repeat</keyword>
<keyword id="KW-0678">Repressor</keyword>
<keyword id="KW-0804">Transcription</keyword>
<keyword id="KW-0805">Transcription regulation</keyword>
<keyword id="KW-0808">Transferase</keyword>
<keyword id="KW-0043">Tumor suppressor</keyword>
<keyword id="KW-0832">Ubl conjugation</keyword>
<keyword id="KW-0833">Ubl conjugation pathway</keyword>
<keyword id="KW-0862">Zinc</keyword>
<keyword id="KW-0863">Zinc-finger</keyword>
<protein>
    <recommendedName>
        <fullName>Transcription intermediary factor 1-alpha</fullName>
        <shortName>TIF1-alpha</shortName>
        <ecNumber>2.3.2.27</ecNumber>
    </recommendedName>
    <alternativeName>
        <fullName>E3 ubiquitin-protein ligase Trim24</fullName>
    </alternativeName>
    <alternativeName>
        <fullName evidence="20">RING-type E3 ubiquitin transferase TIF1-alpha</fullName>
    </alternativeName>
    <alternativeName>
        <fullName>Tripartite motif-containing protein 24</fullName>
    </alternativeName>
</protein>
<accession>Q64127</accession>
<accession>Q64126</accession>
<name>TIF1A_MOUSE</name>
<gene>
    <name type="primary">Trim24</name>
    <name type="synonym">Tif1</name>
    <name type="synonym">Tif1a</name>
</gene>
<reference key="1">
    <citation type="journal article" date="1995" name="EMBO J.">
        <title>The N-terminal part of TIF1, a putative mediator of the ligand-dependent activation function (AF-2) of nuclear receptors, is fused to B-raf in the oncogenic protein T18.</title>
        <authorList>
            <person name="le Douarin B."/>
            <person name="Zechel C."/>
            <person name="Garnier J.-M."/>
            <person name="Lutz Y."/>
            <person name="Tora L."/>
            <person name="Pierrat B."/>
            <person name="Heery D."/>
            <person name="Gronemeyer H."/>
            <person name="Chambon P."/>
            <person name="Losson R."/>
        </authorList>
    </citation>
    <scope>NUCLEOTIDE SEQUENCE [MRNA]</scope>
    <scope>FUNCTION</scope>
    <scope>INTERACTION WITH ESTROGEN RECEPTOR</scope>
    <scope>SUBCELLULAR LOCATION</scope>
    <source>
        <tissue>Carcinoma</tissue>
    </source>
</reference>
<reference key="2">
    <citation type="journal article" date="2004" name="Genome Res.">
        <title>The status, quality, and expansion of the NIH full-length cDNA project: the Mammalian Gene Collection (MGC).</title>
        <authorList>
            <consortium name="The MGC Project Team"/>
        </authorList>
    </citation>
    <scope>NUCLEOTIDE SEQUENCE [LARGE SCALE MRNA] (ISOFORM LONG)</scope>
    <source>
        <strain>C57BL/6J</strain>
        <tissue>Brain</tissue>
    </source>
</reference>
<reference key="3">
    <citation type="journal article" date="1996" name="EMBO J.">
        <title>A possible involvement of TIF1 alpha and TIF1 beta in the epigenetic control of transcription by nuclear receptors.</title>
        <authorList>
            <person name="le Douarin B."/>
            <person name="Nielsen A.L."/>
            <person name="Garnier J.-M."/>
            <person name="Ichinose H."/>
            <person name="Jeanmougin F."/>
            <person name="Losson R."/>
            <person name="Chambon P."/>
        </authorList>
    </citation>
    <scope>INTERACTION WITH CBX1 AND CBX3</scope>
</reference>
<reference key="4">
    <citation type="journal article" date="1999" name="Nat. Genet.">
        <title>A RA-dependent, tumour-growth suppressive transcription complex is the target of the PML-RARalpha and T18 oncoproteins.</title>
        <authorList>
            <person name="Zhong S."/>
            <person name="Delva L."/>
            <person name="Rachez C."/>
            <person name="Cenciarelli C."/>
            <person name="Gandini D."/>
            <person name="Zhang H."/>
            <person name="Kalantry S."/>
            <person name="Freedman L.P."/>
            <person name="Pandolfi P.P."/>
        </authorList>
    </citation>
    <scope>FUNCTION</scope>
    <scope>SUBCELLULAR LOCATION</scope>
    <scope>INTERACTION WITH PML</scope>
</reference>
<reference key="5">
    <citation type="journal article" date="2001" name="Mol. Cell. Biol.">
        <title>Common properties of nuclear protein SP100 and TIF1alpha chromatin factor: role of SUMO modification.</title>
        <authorList>
            <person name="Seeler J.-S."/>
            <person name="Marchio A."/>
            <person name="Losson R."/>
            <person name="Desterro J.M.P."/>
            <person name="Hay R.T."/>
            <person name="Chambon P."/>
            <person name="Dejean A."/>
        </authorList>
    </citation>
    <scope>SUMOYLATION</scope>
    <scope>SUBCELLULAR LOCATION</scope>
    <scope>INTERACTION WITH CBX5</scope>
    <scope>MUTAGENESIS OF LYS-724 AND LYS-742</scope>
</reference>
<reference key="6">
    <citation type="journal article" date="2006" name="J. Cell Biol.">
        <title>Role of TIF1alpha as a modulator of embryonic transcription in the mouse zygote.</title>
        <authorList>
            <person name="Torres-Padilla M.E."/>
            <person name="Zernicka-Goetz M."/>
        </authorList>
    </citation>
    <scope>FUNCTION</scope>
    <scope>SUBCELLULAR LOCATION</scope>
</reference>
<reference key="7">
    <citation type="journal article" date="2006" name="Mol. Endocrinol.">
        <title>Transcriptional intermediary factor 1alpha mediates physical interaction and functional synergy between the coactivator-associated arginine methyltransferase 1 and glucocorticoid receptor-interacting protein 1 nuclear receptor coactivators.</title>
        <authorList>
            <person name="Teyssier C."/>
            <person name="Ou C.Y."/>
            <person name="Khetchoumian K."/>
            <person name="Losson R."/>
            <person name="Stallcup M.R."/>
        </authorList>
    </citation>
    <scope>FUNCTION</scope>
    <scope>INTERACTION WITH CARM1</scope>
    <scope>IDENTIFICATION IN A COACTIVATOR COMPLEX WITH CARM1 AND NCOA2/GRIP1</scope>
</reference>
<reference key="8">
    <citation type="journal article" date="2007" name="Endocrinology">
        <title>Characterization of three growth hormone-responsive transcription factors preferentially expressed in adult female liver.</title>
        <authorList>
            <person name="Laz E.V."/>
            <person name="Holloway M.G."/>
            <person name="Chen C.S."/>
            <person name="Waxman D.J."/>
        </authorList>
    </citation>
    <scope>INDUCTION</scope>
    <scope>TISSUE SPECIFICITY</scope>
</reference>
<reference key="9">
    <citation type="journal article" date="2007" name="Nat. Genet.">
        <title>Loss of Trim24 (Tif1alpha) gene function confers oncogenic activity to retinoic acid receptor alpha.</title>
        <authorList>
            <person name="Khetchoumian K."/>
            <person name="Teletin M."/>
            <person name="Tisserand J."/>
            <person name="Mark M."/>
            <person name="Herquel B."/>
            <person name="Ignat M."/>
            <person name="Zucman-Rossi J."/>
            <person name="Cammas F."/>
            <person name="Lerouge T."/>
            <person name="Thibault C."/>
            <person name="Metzger D."/>
            <person name="Chambon P."/>
            <person name="Losson R."/>
        </authorList>
    </citation>
    <scope>DISRUPTION PHENOTYPE</scope>
    <scope>FUNCTION</scope>
    <scope>TISSUE SPECIFICITY</scope>
</reference>
<reference key="10">
    <citation type="journal article" date="2007" name="Proc. Natl. Acad. Sci. U.S.A.">
        <title>Large-scale phosphorylation analysis of mouse liver.</title>
        <authorList>
            <person name="Villen J."/>
            <person name="Beausoleil S.A."/>
            <person name="Gerber S.A."/>
            <person name="Gygi S.P."/>
        </authorList>
    </citation>
    <scope>PHOSPHORYLATION [LARGE SCALE ANALYSIS] AT SER-1026</scope>
    <scope>IDENTIFICATION BY MASS SPECTROMETRY [LARGE SCALE ANALYSIS]</scope>
    <source>
        <tissue>Liver</tissue>
    </source>
</reference>
<reference key="11">
    <citation type="journal article" date="2008" name="Proc. Natl. Acad. Sci. U.S.A.">
        <title>Arterial calcifications and increased expression of vitamin D receptor targets in mice lacking TIF1alpha.</title>
        <authorList>
            <person name="Ignat M."/>
            <person name="Teletin M."/>
            <person name="Tisserand J."/>
            <person name="Khetchoumian K."/>
            <person name="Dennefeld C."/>
            <person name="Chambon P."/>
            <person name="Losson R."/>
            <person name="Mark M."/>
        </authorList>
    </citation>
    <scope>DISRUPTION PHENOTYPE</scope>
</reference>
<reference key="12">
    <citation type="journal article" date="2009" name="Biochim. Biophys. Acta">
        <title>TRIM24 mediates ligand-dependent activation of androgen receptor and is repressed by a bromodomain-containing protein, BRD7, in prostate cancer cells.</title>
        <authorList>
            <person name="Kikuchi M."/>
            <person name="Okumura F."/>
            <person name="Tsukiyama T."/>
            <person name="Watanabe M."/>
            <person name="Miyajima N."/>
            <person name="Tanaka J."/>
            <person name="Imamura M."/>
            <person name="Hatakeyama S."/>
        </authorList>
    </citation>
    <scope>FUNCTION</scope>
    <scope>SUBCELLULAR LOCATION</scope>
    <scope>INTERACTION WITH AR; KAT5/TIP60 AND BRD7</scope>
</reference>
<reference key="13">
    <citation type="journal article" date="2009" name="Proc. Natl. Acad. Sci. U.S.A.">
        <title>Trim24 targets endogenous p53 for degradation.</title>
        <authorList>
            <person name="Allton K."/>
            <person name="Jain A.K."/>
            <person name="Herz H.M."/>
            <person name="Tsai W.W."/>
            <person name="Jung S.Y."/>
            <person name="Qin J."/>
            <person name="Bergmann A."/>
            <person name="Johnson R.L."/>
            <person name="Barton M.C."/>
        </authorList>
    </citation>
    <scope>FUNCTION</scope>
    <scope>INTERACTION WITH TP53</scope>
    <scope>IDENTIFICATION BY MASS SPECTROMETRY</scope>
</reference>
<reference key="14">
    <citation type="journal article" date="2010" name="Cell">
        <title>A tissue-specific atlas of mouse protein phosphorylation and expression.</title>
        <authorList>
            <person name="Huttlin E.L."/>
            <person name="Jedrychowski M.P."/>
            <person name="Elias J.E."/>
            <person name="Goswami T."/>
            <person name="Rad R."/>
            <person name="Beausoleil S.A."/>
            <person name="Villen J."/>
            <person name="Haas W."/>
            <person name="Sowa M.E."/>
            <person name="Gygi S.P."/>
        </authorList>
    </citation>
    <scope>PHOSPHORYLATION [LARGE SCALE ANALYSIS] AT SER-661; SER-668; SER-812 AND SER-1026</scope>
    <scope>IDENTIFICATION BY MASS SPECTROMETRY [LARGE SCALE ANALYSIS]</scope>
    <source>
        <tissue>Brain</tissue>
        <tissue>Kidney</tissue>
        <tissue>Liver</tissue>
        <tissue>Lung</tissue>
        <tissue>Pancreas</tissue>
        <tissue>Spleen</tissue>
        <tissue>Testis</tissue>
    </source>
</reference>
<reference key="15">
    <citation type="journal article" date="2014" name="Mol. Cell. Proteomics">
        <title>Immunoaffinity enrichment and mass spectrometry analysis of protein methylation.</title>
        <authorList>
            <person name="Guo A."/>
            <person name="Gu H."/>
            <person name="Zhou J."/>
            <person name="Mulhern D."/>
            <person name="Wang Y."/>
            <person name="Lee K.A."/>
            <person name="Yang V."/>
            <person name="Aguiar M."/>
            <person name="Kornhauser J."/>
            <person name="Jia X."/>
            <person name="Ren J."/>
            <person name="Beausoleil S.A."/>
            <person name="Silva J.C."/>
            <person name="Vemulapalli V."/>
            <person name="Bedford M.T."/>
            <person name="Comb M.J."/>
        </authorList>
    </citation>
    <scope>METHYLATION [LARGE SCALE ANALYSIS] AT ARG-469</scope>
    <scope>IDENTIFICATION BY MASS SPECTROMETRY [LARGE SCALE ANALYSIS]</scope>
    <source>
        <tissue>Embryo</tissue>
    </source>
</reference>
<organism>
    <name type="scientific">Mus musculus</name>
    <name type="common">Mouse</name>
    <dbReference type="NCBI Taxonomy" id="10090"/>
    <lineage>
        <taxon>Eukaryota</taxon>
        <taxon>Metazoa</taxon>
        <taxon>Chordata</taxon>
        <taxon>Craniata</taxon>
        <taxon>Vertebrata</taxon>
        <taxon>Euteleostomi</taxon>
        <taxon>Mammalia</taxon>
        <taxon>Eutheria</taxon>
        <taxon>Euarchontoglires</taxon>
        <taxon>Glires</taxon>
        <taxon>Rodentia</taxon>
        <taxon>Myomorpha</taxon>
        <taxon>Muroidea</taxon>
        <taxon>Muridae</taxon>
        <taxon>Murinae</taxon>
        <taxon>Mus</taxon>
        <taxon>Mus</taxon>
    </lineage>
</organism>
<comment type="function">
    <text evidence="1 9 11 12 14 16 17 18">Transcriptional coactivator that interacts with numerous nuclear receptors and coactivators and modulates the transcription of target genes. Interacts with chromatin depending on histone H3 modifications, having the highest affinity for histone H3 that is both unmodified at 'Lys-4' (H3K4me0) and acetylated at 'Lys-23' (H3K23ac) (By similarity). Has E3 protein-ubiquitin ligase activity. Promotes ubiquitination and proteasomal degradation of p53/TP53. Plays a role in the regulation of cell proliferation and apoptosis via its effects on p53/TP53 levels. Up-regulates ligand-dependent transcription activation by AR, GCR/NR3C1, thyroid hormone receptor (TR) and ESR1. Modulates transcription activation by retinoic acid (RA) receptors, such as RARA. Plays a role in regulating retinoic acid-dependent proliferation of hepatocytes. Required for normal transition from proliferating neonatal hepatocytes to quiescent adult hepatocytes.</text>
</comment>
<comment type="function">
    <text evidence="2 9 11 12 14 16 17 18">Transcriptional coactivator that interacts with numerous nuclear receptors and coactivators and modulates the transcription of target genes. Interacts with chromatin depending on histone H3 modifications, having the highest affinity for histone H3 that is both unmodified at 'Lys-4' (H3K4me0) and acetylated at 'Lys-23' (H3K23ac). Has E3 protein-ubiquitin ligase activity. During the DNA damage response, participates in an autoregulatory feedback loop with TP53. Early in response to DNA damage, ATM kinase phosphorylates TRIM24 leading to its ubiquitination and degradation. After sufficient DNA repair has occurred, TP53 activates TRIM24 transcription, ultimately leading to TRIM24-mediated TP53 ubiquitination and degradation (By similarity). Plays a role in the regulation of cell proliferation and apoptosis, at least in part via its effects on p53/TP53 levels. Up-regulates ligand-dependent transcription activation by AR, GCR/NR3C1, thyroid hormone receptor (TR) and ESR1. Modulates transcription activation by retinoic acid (RA) receptors, including RARA. Plays a role in regulating retinoic acid-dependent proliferation of hepatocytes (By similarity). Also participates in innate immunity by mediating the specific 'Lys-63'-linked ubiquitination of TRAF3 leading to activation of downstream signal transduction of the type I IFN pathway. Additionally, negatively regulates NLRP3/CASP1/IL-1beta-mediated pyroptosis and cell migration probably by ubiquitinating NLRP3 (By similarity).</text>
</comment>
<comment type="catalytic activity">
    <reaction>
        <text>S-ubiquitinyl-[E2 ubiquitin-conjugating enzyme]-L-cysteine + [acceptor protein]-L-lysine = [E2 ubiquitin-conjugating enzyme]-L-cysteine + N(6)-ubiquitinyl-[acceptor protein]-L-lysine.</text>
        <dbReference type="EC" id="2.3.2.27"/>
    </reaction>
</comment>
<comment type="pathway">
    <text>Protein modification; protein ubiquitination.</text>
</comment>
<comment type="subunit">
    <text evidence="1 9 10 11 16 17 18 19">Interacts (via bromo domain) with histone H3 (via N-terminus), provided that it is not methylated at 'Lys-4' (H3K4me0). Does not interact with histone H3 that is methylated at 'Lys-4' (H3K4me1, H3K4me2 or H3K4me3). Interacts (via bromo domain) with histone H3 (via N-terminus) that is acetylated at 'Lys-23' (H3K23ac). Has the highest affinity for histone H3 that is both unmodified at 'Lys-4' (H3K4me0) and acetylated at 'Lys-23' (H3K23ac). Has very low affinity for histone H3 that is methylated at 'Lys-9' (H3K9me), or acetylated at both 'Lys-9' (H3K9ac) and 'Lys-14' (H3K14ac), or acetylated at 'Lys-27' (H3K27ac) (in vitro). Interacts with TRIM16. Interacts with NR3C2/MCR (By similarity). Interacts with the ligand-binding domain of estrogen receptors (in vitro). Interaction with DNA-bound estrogen receptors requires the presence of estradiol (By similarity). Interacts with AR, CARM1, KAT5/TIP60, NCOA2/GRIP1, BRD7, CBX1, CBX3 and CBX5. Part of a coactivator complex containing TRIM24, NCOA2/GRIP1 and CARM1. Interacts with p53/TP53 and PML.</text>
</comment>
<comment type="interaction">
    <interactant intactId="EBI-307947">
        <id>Q64127</id>
    </interactant>
    <interactant intactId="EBI-78119">
        <id>P83917</id>
        <label>Cbx1</label>
    </interactant>
    <organismsDiffer>false</organismsDiffer>
    <experiments>4</experiments>
</comment>
<comment type="interaction">
    <interactant intactId="EBI-307947">
        <id>Q64127</id>
    </interactant>
    <interactant intactId="EBI-307973">
        <id>Q61686</id>
        <label>Cbx5</label>
    </interactant>
    <organismsDiffer>false</organismsDiffer>
    <experiments>4</experiments>
</comment>
<comment type="interaction">
    <interactant intactId="EBI-307947">
        <id>Q64127</id>
    </interactant>
    <interactant intactId="EBI-474016">
        <id>P02340</id>
        <label>Tp53</label>
    </interactant>
    <organismsDiffer>false</organismsDiffer>
    <experiments>2</experiments>
</comment>
<comment type="interaction">
    <interactant intactId="EBI-307947">
        <id>Q64127</id>
    </interactant>
    <interactant intactId="EBI-3043980">
        <id>Q99PP7</id>
        <label>Trim33</label>
    </interactant>
    <organismsDiffer>false</organismsDiffer>
    <experiments>2</experiments>
</comment>
<comment type="subcellular location">
    <subcellularLocation>
        <location evidence="9 10 12 17 18">Nucleus</location>
    </subcellularLocation>
    <subcellularLocation>
        <location evidence="12">Cytoplasm</location>
    </subcellularLocation>
    <text evidence="2 9 12">Detected in the cytoplasm of the zygote (PubMed:16880268). Translocates into the pronucleus at the time of genome activation (PubMed:16880268). Colocalizes with sites of active transcription (PubMed:10610177). Localizes to sites of DNA damage (By similarity).</text>
</comment>
<comment type="alternative products">
    <event type="alternative splicing"/>
    <isoform>
        <id>Q64127-1</id>
        <name>Long</name>
        <sequence type="displayed"/>
    </isoform>
    <isoform>
        <id>Q64127-2</id>
        <name>Short</name>
        <sequence type="described" ref="VSP_005773"/>
    </isoform>
</comment>
<comment type="tissue specificity">
    <text evidence="13 14">Detected in embryonic and adult liver. Detected in zygote and throughout embryogenesis (at protein level). Detected in all adult tissues, with the highest expression level in testis.</text>
</comment>
<comment type="induction">
    <text evidence="13">Before puberty, highly expressed in liver from males and females. After puberty, expression is considerably higher in liver from females compared to males. Up-regulated in males by continuous exposure to growth hormone.</text>
</comment>
<comment type="PTM">
    <text evidence="10">Sumoylated.</text>
</comment>
<comment type="PTM">
    <text evidence="2">Phosphorylated at Ser-768 by ATM kinase induces ubiquitination and degradation during DNA damage.</text>
</comment>
<comment type="PTM">
    <text evidence="2">Undergoes ubiquitination-mediated degradation in response to DNA damage.</text>
</comment>
<comment type="disease">
    <text>A chromosomal aberration involving TRIM24 produces a TRIM24-BRAF (T18) oncogene originally isolated from a furfural-induced hepatoma.</text>
</comment>
<comment type="disruption phenotype">
    <text evidence="14 15">No visible phenotype during the first few months. Impaired transition from proliferating neonatal hepatocytes to quiescent adult hepatocytes. Hepatocytes continue to proliferate throughout adulthood. High incidence hypertrophic hepatocytes with enlarged nuclei after three months. After nine months, about half of the mice have hepatocellular adenomas. Very high incidence of hepatocarcinoma in 13 to 29 month old mice, increasing from 40% to 80%. When one copy of Rara is disrupted, mice do not develop liver tumors or liver dysplasia.</text>
</comment>
<sequence>MEVAVEKAAAAAAPAGGPAAAAPSGENEAESRQGPDSESGGEASRLNLLDTCAVCHQNIQSRVPKLLPCLHSFCQRCLPAPQRYLMLTAPALGSAETPPPAPAPAPAPGSPAGGPSPFATQVGVIRCPVCSQECAERHIIDNFFVKDTTEVPSSTVEKSNQVCTSCEDNAEANGFCVECVEWLCKTCIRAHQRVKFTKDHTVRQKEEVSPEAVGVTSQRPVFCPFHKKEQLKLYCETCDKLTCRDCQLLEHKEHRYQFIEEAFQNQKVIIDTLITKLMEKTKYIKYTGNQIQNRIIEINQNQKQVEQDIKVAIFTLMVEINKKGKALLHQLESLAKDHRMKLMQQQQEVAGLSKQLEHVMHFSKWAVSSGSSTALLYSKRLITYRLRHLLRARCDASPVTNTTIQFHCDPSFWAQNIINLGSLVIEDKESQPQMPKQNPVVEQSSQPPGGLPSNQLSKFPTQISLAQLRLQHIQQQVMAQRQQVQRRPAPVGLPNPRMQGPIQQPSISHQHPPPRLINFQNHSPKPNGPVLPPYPQQLRYSPSQNVPRQTTIKPNPLQMAFLAQQAIKQWQISSVQAPPTTASSSSSTPSSPTITSAAGYDGKAFSSPMIDLSAPVGGSYNLPSLPDIDCSSTIMLDNIARKDTGVDHAQPRPPSNRTVQSPNSSVPSPGLAGPVTMTSVHPPIRSPSASSVGSRGSSGSSSKPAGADSTHKVPVVMLEPIRIKQENSGPPENYDFPVVIVKQESDEESRPQNTNYPRSILTSLLLNSSQSSASEETVLRSDAPDSTGDQPGLHQENSSNGKSEWSDASQKSPVHVGETRKEDDPNEDWCAVCQNGGELLCCEKCPKVFHLTCHVPTLTNFPSGEWICTFCRDLSKPEVDYDCDVPSHHSEKRKSEGLTKLTPIDKRKCERLLLFLYCHEMSLAFQDPVPLTVPDYYKIIKNPMDLSTIKKRLQEDYCMYTKPEDFVADFRLIFQNCAEFNEPDSEVANAGIKLESYFEELLKNLYPEKRFPKVEFRHEAEDCKFSDDSDDDFVQPRKKRLKSTEDRQLLK</sequence>